<proteinExistence type="inferred from homology"/>
<organism>
    <name type="scientific">Vibrio cholerae serotype O1 (strain M66-2)</name>
    <dbReference type="NCBI Taxonomy" id="579112"/>
    <lineage>
        <taxon>Bacteria</taxon>
        <taxon>Pseudomonadati</taxon>
        <taxon>Pseudomonadota</taxon>
        <taxon>Gammaproteobacteria</taxon>
        <taxon>Vibrionales</taxon>
        <taxon>Vibrionaceae</taxon>
        <taxon>Vibrio</taxon>
    </lineage>
</organism>
<evidence type="ECO:0000255" key="1">
    <source>
        <dbReference type="HAMAP-Rule" id="MF_01659"/>
    </source>
</evidence>
<feature type="chain" id="PRO_1000187098" description="2-succinyl-5-enolpyruvyl-6-hydroxy-3-cyclohexene-1-carboxylate synthase">
    <location>
        <begin position="1"/>
        <end position="570"/>
    </location>
</feature>
<keyword id="KW-0460">Magnesium</keyword>
<keyword id="KW-0464">Manganese</keyword>
<keyword id="KW-0474">Menaquinone biosynthesis</keyword>
<keyword id="KW-0479">Metal-binding</keyword>
<keyword id="KW-0786">Thiamine pyrophosphate</keyword>
<keyword id="KW-0808">Transferase</keyword>
<sequence>MNRDQALLNRLWSRVLLEELSRLGVTQVCVAPGSRSTPLTLEANANTAFTLHTHYDERGLGFMALGLAKASQQPVAVIVTSGTAVANLLPAIAESKLTGERLVVLTADRPLELVGCGANQAIVQSGIFSSHVTASLELPSPAIHHPLSWLLTSIDEVMARQALLGGSVHINCPFPEPLYSAGDEAIYQPYLQPVQRWREQARPYTQVHQGLVQSVPAAIDGLLTKGVVIVGSLSLQEAQAAKRFAKAMGWPLLCDPQSGISSQWAHFDLWLQHPKAREQLNQAQCVVQFGSRIVSKRLLQWLEAWCATGLGEYHYIAPHSARNNPWHAMQQQWVCEISHWVDAVLSKRLAGQHTQQGWADELTHYAQSVRQLAQLHFSSSSLSEVALALDLTERATQADLFLGNSLIVRLVDIFSALDGREVFSNRGASGIDGLVATASGVQRARQKPLLMLLGDTSLLYDLNSLALMRNPAQPTVIVVTNNDGGAIFDLLPVPSEQREALYQMPHGMDFAHAASQFGLAYCAAQTLEHYQTLVEEHFAHGAGTLLIEVKTPPQQASMHIKQLTSQLHAL</sequence>
<accession>C3LNS6</accession>
<protein>
    <recommendedName>
        <fullName evidence="1">2-succinyl-5-enolpyruvyl-6-hydroxy-3-cyclohexene-1-carboxylate synthase</fullName>
        <shortName evidence="1">SEPHCHC synthase</shortName>
        <ecNumber evidence="1">2.2.1.9</ecNumber>
    </recommendedName>
    <alternativeName>
        <fullName evidence="1">Menaquinone biosynthesis protein MenD</fullName>
    </alternativeName>
</protein>
<name>MEND_VIBCM</name>
<dbReference type="EC" id="2.2.1.9" evidence="1"/>
<dbReference type="EMBL" id="CP001233">
    <property type="protein sequence ID" value="ACP06202.1"/>
    <property type="molecule type" value="Genomic_DNA"/>
</dbReference>
<dbReference type="RefSeq" id="WP_001078087.1">
    <property type="nucleotide sequence ID" value="NC_012578.1"/>
</dbReference>
<dbReference type="SMR" id="C3LNS6"/>
<dbReference type="KEGG" id="vcm:VCM66_1899"/>
<dbReference type="HOGENOM" id="CLU_006051_3_0_6"/>
<dbReference type="UniPathway" id="UPA00079"/>
<dbReference type="UniPathway" id="UPA01057">
    <property type="reaction ID" value="UER00164"/>
</dbReference>
<dbReference type="Proteomes" id="UP000001217">
    <property type="component" value="Chromosome I"/>
</dbReference>
<dbReference type="GO" id="GO:0070204">
    <property type="term" value="F:2-succinyl-5-enolpyruvyl-6-hydroxy-3-cyclohexene-1-carboxylic-acid synthase activity"/>
    <property type="evidence" value="ECO:0007669"/>
    <property type="project" value="UniProtKB-UniRule"/>
</dbReference>
<dbReference type="GO" id="GO:0000287">
    <property type="term" value="F:magnesium ion binding"/>
    <property type="evidence" value="ECO:0007669"/>
    <property type="project" value="UniProtKB-UniRule"/>
</dbReference>
<dbReference type="GO" id="GO:0030145">
    <property type="term" value="F:manganese ion binding"/>
    <property type="evidence" value="ECO:0007669"/>
    <property type="project" value="UniProtKB-UniRule"/>
</dbReference>
<dbReference type="GO" id="GO:0030976">
    <property type="term" value="F:thiamine pyrophosphate binding"/>
    <property type="evidence" value="ECO:0007669"/>
    <property type="project" value="UniProtKB-UniRule"/>
</dbReference>
<dbReference type="GO" id="GO:0009234">
    <property type="term" value="P:menaquinone biosynthetic process"/>
    <property type="evidence" value="ECO:0007669"/>
    <property type="project" value="UniProtKB-UniRule"/>
</dbReference>
<dbReference type="CDD" id="cd07037">
    <property type="entry name" value="TPP_PYR_MenD"/>
    <property type="match status" value="1"/>
</dbReference>
<dbReference type="CDD" id="cd02009">
    <property type="entry name" value="TPP_SHCHC_synthase"/>
    <property type="match status" value="1"/>
</dbReference>
<dbReference type="FunFam" id="3.40.50.970:FF:000103">
    <property type="entry name" value="2-succinyl-5-enolpyruvyl-6-hydroxy-3-cyclohexene-1-carboxylate synthase"/>
    <property type="match status" value="1"/>
</dbReference>
<dbReference type="Gene3D" id="3.40.50.970">
    <property type="match status" value="2"/>
</dbReference>
<dbReference type="Gene3D" id="3.40.50.1220">
    <property type="entry name" value="TPP-binding domain"/>
    <property type="match status" value="1"/>
</dbReference>
<dbReference type="HAMAP" id="MF_01659">
    <property type="entry name" value="MenD"/>
    <property type="match status" value="1"/>
</dbReference>
<dbReference type="InterPro" id="IPR004433">
    <property type="entry name" value="MenaQ_synth_MenD"/>
</dbReference>
<dbReference type="InterPro" id="IPR032264">
    <property type="entry name" value="MenD_middle"/>
</dbReference>
<dbReference type="InterPro" id="IPR029061">
    <property type="entry name" value="THDP-binding"/>
</dbReference>
<dbReference type="InterPro" id="IPR012001">
    <property type="entry name" value="Thiamin_PyroP_enz_TPP-bd_dom"/>
</dbReference>
<dbReference type="InterPro" id="IPR011766">
    <property type="entry name" value="TPP_enzyme_TPP-bd"/>
</dbReference>
<dbReference type="NCBIfam" id="TIGR00173">
    <property type="entry name" value="menD"/>
    <property type="match status" value="1"/>
</dbReference>
<dbReference type="PANTHER" id="PTHR42916">
    <property type="entry name" value="2-SUCCINYL-5-ENOLPYRUVYL-6-HYDROXY-3-CYCLOHEXENE-1-CARBOXYLATE SYNTHASE"/>
    <property type="match status" value="1"/>
</dbReference>
<dbReference type="PANTHER" id="PTHR42916:SF1">
    <property type="entry name" value="PROTEIN PHYLLO, CHLOROPLASTIC"/>
    <property type="match status" value="1"/>
</dbReference>
<dbReference type="Pfam" id="PF02775">
    <property type="entry name" value="TPP_enzyme_C"/>
    <property type="match status" value="1"/>
</dbReference>
<dbReference type="Pfam" id="PF16582">
    <property type="entry name" value="TPP_enzyme_M_2"/>
    <property type="match status" value="1"/>
</dbReference>
<dbReference type="Pfam" id="PF02776">
    <property type="entry name" value="TPP_enzyme_N"/>
    <property type="match status" value="1"/>
</dbReference>
<dbReference type="PIRSF" id="PIRSF004983">
    <property type="entry name" value="MenD"/>
    <property type="match status" value="1"/>
</dbReference>
<dbReference type="SUPFAM" id="SSF52518">
    <property type="entry name" value="Thiamin diphosphate-binding fold (THDP-binding)"/>
    <property type="match status" value="2"/>
</dbReference>
<reference key="1">
    <citation type="journal article" date="2008" name="PLoS ONE">
        <title>A recalibrated molecular clock and independent origins for the cholera pandemic clones.</title>
        <authorList>
            <person name="Feng L."/>
            <person name="Reeves P.R."/>
            <person name="Lan R."/>
            <person name="Ren Y."/>
            <person name="Gao C."/>
            <person name="Zhou Z."/>
            <person name="Ren Y."/>
            <person name="Cheng J."/>
            <person name="Wang W."/>
            <person name="Wang J."/>
            <person name="Qian W."/>
            <person name="Li D."/>
            <person name="Wang L."/>
        </authorList>
    </citation>
    <scope>NUCLEOTIDE SEQUENCE [LARGE SCALE GENOMIC DNA]</scope>
    <source>
        <strain>M66-2</strain>
    </source>
</reference>
<gene>
    <name evidence="1" type="primary">menD</name>
    <name type="ordered locus">VCM66_1899</name>
</gene>
<comment type="function">
    <text evidence="1">Catalyzes the thiamine diphosphate-dependent decarboxylation of 2-oxoglutarate and the subsequent addition of the resulting succinic semialdehyde-thiamine pyrophosphate anion to isochorismate to yield 2-succinyl-5-enolpyruvyl-6-hydroxy-3-cyclohexene-1-carboxylate (SEPHCHC).</text>
</comment>
<comment type="catalytic activity">
    <reaction evidence="1">
        <text>isochorismate + 2-oxoglutarate + H(+) = 5-enolpyruvoyl-6-hydroxy-2-succinyl-cyclohex-3-ene-1-carboxylate + CO2</text>
        <dbReference type="Rhea" id="RHEA:25593"/>
        <dbReference type="ChEBI" id="CHEBI:15378"/>
        <dbReference type="ChEBI" id="CHEBI:16526"/>
        <dbReference type="ChEBI" id="CHEBI:16810"/>
        <dbReference type="ChEBI" id="CHEBI:29780"/>
        <dbReference type="ChEBI" id="CHEBI:58818"/>
        <dbReference type="EC" id="2.2.1.9"/>
    </reaction>
</comment>
<comment type="cofactor">
    <cofactor evidence="1">
        <name>Mg(2+)</name>
        <dbReference type="ChEBI" id="CHEBI:18420"/>
    </cofactor>
    <cofactor evidence="1">
        <name>Mn(2+)</name>
        <dbReference type="ChEBI" id="CHEBI:29035"/>
    </cofactor>
</comment>
<comment type="cofactor">
    <cofactor evidence="1">
        <name>thiamine diphosphate</name>
        <dbReference type="ChEBI" id="CHEBI:58937"/>
    </cofactor>
    <text evidence="1">Binds 1 thiamine pyrophosphate per subunit.</text>
</comment>
<comment type="pathway">
    <text evidence="1">Quinol/quinone metabolism; 1,4-dihydroxy-2-naphthoate biosynthesis; 1,4-dihydroxy-2-naphthoate from chorismate: step 2/7.</text>
</comment>
<comment type="pathway">
    <text evidence="1">Quinol/quinone metabolism; menaquinone biosynthesis.</text>
</comment>
<comment type="subunit">
    <text evidence="1">Homodimer.</text>
</comment>
<comment type="similarity">
    <text evidence="1">Belongs to the TPP enzyme family. MenD subfamily.</text>
</comment>